<protein>
    <recommendedName>
        <fullName evidence="1">HTH-type transcriptional regulator MntR</fullName>
    </recommendedName>
    <alternativeName>
        <fullName evidence="1">Manganese transport regulator</fullName>
    </alternativeName>
</protein>
<feature type="chain" id="PRO_1000212738" description="HTH-type transcriptional regulator MntR">
    <location>
        <begin position="1"/>
        <end position="142"/>
    </location>
</feature>
<feature type="domain" description="HTH dtxR-type" evidence="1">
    <location>
        <begin position="1"/>
        <end position="63"/>
    </location>
</feature>
<feature type="binding site" evidence="1">
    <location>
        <position position="8"/>
    </location>
    <ligand>
        <name>Mn(2+)</name>
        <dbReference type="ChEBI" id="CHEBI:29035"/>
        <label>1</label>
    </ligand>
</feature>
<feature type="binding site" evidence="1">
    <location>
        <position position="11"/>
    </location>
    <ligand>
        <name>Mn(2+)</name>
        <dbReference type="ChEBI" id="CHEBI:29035"/>
        <label>2</label>
    </ligand>
</feature>
<feature type="binding site" evidence="1">
    <location>
        <position position="77"/>
    </location>
    <ligand>
        <name>Mn(2+)</name>
        <dbReference type="ChEBI" id="CHEBI:29035"/>
        <label>2</label>
    </ligand>
</feature>
<feature type="binding site" evidence="1">
    <location>
        <position position="99"/>
    </location>
    <ligand>
        <name>Mn(2+)</name>
        <dbReference type="ChEBI" id="CHEBI:29035"/>
        <label>1</label>
    </ligand>
</feature>
<feature type="binding site" evidence="1">
    <location>
        <position position="99"/>
    </location>
    <ligand>
        <name>Mn(2+)</name>
        <dbReference type="ChEBI" id="CHEBI:29035"/>
        <label>2</label>
    </ligand>
</feature>
<feature type="binding site" evidence="1">
    <location>
        <position position="102"/>
    </location>
    <ligand>
        <name>Mn(2+)</name>
        <dbReference type="ChEBI" id="CHEBI:29035"/>
        <label>1</label>
    </ligand>
</feature>
<feature type="binding site" evidence="1">
    <location>
        <position position="102"/>
    </location>
    <ligand>
        <name>Mn(2+)</name>
        <dbReference type="ChEBI" id="CHEBI:29035"/>
        <label>2</label>
    </ligand>
</feature>
<feature type="binding site" evidence="1">
    <location>
        <position position="103"/>
    </location>
    <ligand>
        <name>Mn(2+)</name>
        <dbReference type="ChEBI" id="CHEBI:29035"/>
        <label>1</label>
    </ligand>
</feature>
<sequence>MPTPSMEDYIEKIYSLIETKGYARVSDIADELFVHPSSVTKMVQKLDKDEYLIYEKYRGLILTPKGTQMGKRLLERHALLESFLSIIGVDSSHIYHDVEGIEHHLSWNSIDRIGNVVQFFENHPDALEALKAMETTKPETNE</sequence>
<name>MNTR_LISW6</name>
<keyword id="KW-0010">Activator</keyword>
<keyword id="KW-0963">Cytoplasm</keyword>
<keyword id="KW-0238">DNA-binding</keyword>
<keyword id="KW-0464">Manganese</keyword>
<keyword id="KW-0479">Metal-binding</keyword>
<keyword id="KW-0678">Repressor</keyword>
<keyword id="KW-0804">Transcription</keyword>
<keyword id="KW-0805">Transcription regulation</keyword>
<organism>
    <name type="scientific">Listeria welshimeri serovar 6b (strain ATCC 35897 / DSM 20650 / CCUG 15529 / CIP 8149 / NCTC 11857 / SLCC 5334 / V8)</name>
    <dbReference type="NCBI Taxonomy" id="386043"/>
    <lineage>
        <taxon>Bacteria</taxon>
        <taxon>Bacillati</taxon>
        <taxon>Bacillota</taxon>
        <taxon>Bacilli</taxon>
        <taxon>Bacillales</taxon>
        <taxon>Listeriaceae</taxon>
        <taxon>Listeria</taxon>
    </lineage>
</organism>
<dbReference type="EMBL" id="AM263198">
    <property type="protein sequence ID" value="CAK21315.1"/>
    <property type="molecule type" value="Genomic_DNA"/>
</dbReference>
<dbReference type="RefSeq" id="WP_011702664.1">
    <property type="nucleotide sequence ID" value="NC_008555.1"/>
</dbReference>
<dbReference type="SMR" id="A0AJY3"/>
<dbReference type="STRING" id="386043.lwe1897"/>
<dbReference type="GeneID" id="61189798"/>
<dbReference type="KEGG" id="lwe:lwe1897"/>
<dbReference type="eggNOG" id="COG1321">
    <property type="taxonomic scope" value="Bacteria"/>
</dbReference>
<dbReference type="HOGENOM" id="CLU_069532_3_0_9"/>
<dbReference type="OrthoDB" id="9791355at2"/>
<dbReference type="Proteomes" id="UP000000779">
    <property type="component" value="Chromosome"/>
</dbReference>
<dbReference type="GO" id="GO:0005737">
    <property type="term" value="C:cytoplasm"/>
    <property type="evidence" value="ECO:0007669"/>
    <property type="project" value="UniProtKB-SubCell"/>
</dbReference>
<dbReference type="GO" id="GO:0003677">
    <property type="term" value="F:DNA binding"/>
    <property type="evidence" value="ECO:0007669"/>
    <property type="project" value="UniProtKB-KW"/>
</dbReference>
<dbReference type="GO" id="GO:0003700">
    <property type="term" value="F:DNA-binding transcription factor activity"/>
    <property type="evidence" value="ECO:0007669"/>
    <property type="project" value="UniProtKB-UniRule"/>
</dbReference>
<dbReference type="GO" id="GO:0030145">
    <property type="term" value="F:manganese ion binding"/>
    <property type="evidence" value="ECO:0007669"/>
    <property type="project" value="UniProtKB-UniRule"/>
</dbReference>
<dbReference type="GO" id="GO:0046983">
    <property type="term" value="F:protein dimerization activity"/>
    <property type="evidence" value="ECO:0007669"/>
    <property type="project" value="InterPro"/>
</dbReference>
<dbReference type="GO" id="GO:0030026">
    <property type="term" value="P:intracellular manganese ion homeostasis"/>
    <property type="evidence" value="ECO:0007669"/>
    <property type="project" value="UniProtKB-UniRule"/>
</dbReference>
<dbReference type="FunFam" id="1.10.10.10:FF:000189">
    <property type="entry name" value="HTH-type transcriptional regulator MntR"/>
    <property type="match status" value="1"/>
</dbReference>
<dbReference type="Gene3D" id="1.10.60.10">
    <property type="entry name" value="Iron dependent repressor, metal binding and dimerisation domain"/>
    <property type="match status" value="1"/>
</dbReference>
<dbReference type="Gene3D" id="1.10.10.10">
    <property type="entry name" value="Winged helix-like DNA-binding domain superfamily/Winged helix DNA-binding domain"/>
    <property type="match status" value="1"/>
</dbReference>
<dbReference type="HAMAP" id="MF_00732">
    <property type="entry name" value="HTH_MntR"/>
    <property type="match status" value="1"/>
</dbReference>
<dbReference type="InterPro" id="IPR050536">
    <property type="entry name" value="DtxR_MntR_Metal-Reg"/>
</dbReference>
<dbReference type="InterPro" id="IPR001367">
    <property type="entry name" value="Fe_dep_repressor"/>
</dbReference>
<dbReference type="InterPro" id="IPR036421">
    <property type="entry name" value="Fe_dep_repressor_sf"/>
</dbReference>
<dbReference type="InterPro" id="IPR022687">
    <property type="entry name" value="HTH_DTXR"/>
</dbReference>
<dbReference type="InterPro" id="IPR022897">
    <property type="entry name" value="HTH_tscrpt_reg_MntR"/>
</dbReference>
<dbReference type="InterPro" id="IPR022689">
    <property type="entry name" value="Iron_dep_repressor"/>
</dbReference>
<dbReference type="InterPro" id="IPR036388">
    <property type="entry name" value="WH-like_DNA-bd_sf"/>
</dbReference>
<dbReference type="InterPro" id="IPR036390">
    <property type="entry name" value="WH_DNA-bd_sf"/>
</dbReference>
<dbReference type="NCBIfam" id="NF003025">
    <property type="entry name" value="PRK03902.1"/>
    <property type="match status" value="1"/>
</dbReference>
<dbReference type="PANTHER" id="PTHR33238">
    <property type="entry name" value="IRON (METAL) DEPENDENT REPRESSOR, DTXR FAMILY"/>
    <property type="match status" value="1"/>
</dbReference>
<dbReference type="PANTHER" id="PTHR33238:SF11">
    <property type="entry name" value="TRANSCRIPTIONAL REGULATOR MNTR"/>
    <property type="match status" value="1"/>
</dbReference>
<dbReference type="Pfam" id="PF02742">
    <property type="entry name" value="Fe_dep_repr_C"/>
    <property type="match status" value="1"/>
</dbReference>
<dbReference type="Pfam" id="PF01325">
    <property type="entry name" value="Fe_dep_repress"/>
    <property type="match status" value="1"/>
</dbReference>
<dbReference type="SMART" id="SM00529">
    <property type="entry name" value="HTH_DTXR"/>
    <property type="match status" value="1"/>
</dbReference>
<dbReference type="SUPFAM" id="SSF47979">
    <property type="entry name" value="Iron-dependent repressor protein, dimerization domain"/>
    <property type="match status" value="1"/>
</dbReference>
<dbReference type="SUPFAM" id="SSF46785">
    <property type="entry name" value="Winged helix' DNA-binding domain"/>
    <property type="match status" value="1"/>
</dbReference>
<dbReference type="PROSITE" id="PS50944">
    <property type="entry name" value="HTH_DTXR"/>
    <property type="match status" value="1"/>
</dbReference>
<accession>A0AJY3</accession>
<comment type="function">
    <text evidence="1">Central regulator of manganese homeostasis.</text>
</comment>
<comment type="activity regulation">
    <text evidence="1">DNA binding is strongly activated by Mn(2+).</text>
</comment>
<comment type="subunit">
    <text evidence="1">Homodimer.</text>
</comment>
<comment type="subcellular location">
    <subcellularLocation>
        <location evidence="1">Cytoplasm</location>
    </subcellularLocation>
</comment>
<comment type="similarity">
    <text evidence="1">Belongs to the DtxR/MntR family.</text>
</comment>
<proteinExistence type="inferred from homology"/>
<reference key="1">
    <citation type="journal article" date="2006" name="J. Bacteriol.">
        <title>Whole-genome sequence of Listeria welshimeri reveals common steps in genome reduction with Listeria innocua as compared to Listeria monocytogenes.</title>
        <authorList>
            <person name="Hain T."/>
            <person name="Steinweg C."/>
            <person name="Kuenne C.T."/>
            <person name="Billion A."/>
            <person name="Ghai R."/>
            <person name="Chatterjee S.S."/>
            <person name="Domann E."/>
            <person name="Kaerst U."/>
            <person name="Goesmann A."/>
            <person name="Bekel T."/>
            <person name="Bartels D."/>
            <person name="Kaiser O."/>
            <person name="Meyer F."/>
            <person name="Puehler A."/>
            <person name="Weisshaar B."/>
            <person name="Wehland J."/>
            <person name="Liang C."/>
            <person name="Dandekar T."/>
            <person name="Lampidis R."/>
            <person name="Kreft J."/>
            <person name="Goebel W."/>
            <person name="Chakraborty T."/>
        </authorList>
    </citation>
    <scope>NUCLEOTIDE SEQUENCE [LARGE SCALE GENOMIC DNA]</scope>
    <source>
        <strain>ATCC 35897 / DSM 20650 / CCUG 15529 / CIP 8149 / NCTC 11857 / SLCC 5334 / V8</strain>
    </source>
</reference>
<gene>
    <name evidence="1" type="primary">mntR</name>
    <name type="ordered locus">lwe1897</name>
</gene>
<evidence type="ECO:0000255" key="1">
    <source>
        <dbReference type="HAMAP-Rule" id="MF_00732"/>
    </source>
</evidence>